<gene>
    <name type="primary">ACS5</name>
    <name type="synonym">ACC5</name>
    <name type="synonym">ETO2</name>
    <name type="ordered locus">At5g65800</name>
    <name type="ORF">F6H11.90</name>
    <name type="ORF">MPA24.15</name>
</gene>
<name>1A15_ARATH</name>
<keyword id="KW-0266">Ethylene biosynthesis</keyword>
<keyword id="KW-0292">Fruit ripening</keyword>
<keyword id="KW-0456">Lyase</keyword>
<keyword id="KW-0597">Phosphoprotein</keyword>
<keyword id="KW-0663">Pyridoxal phosphate</keyword>
<keyword id="KW-1185">Reference proteome</keyword>
<keyword id="KW-0949">S-adenosyl-L-methionine</keyword>
<keyword id="KW-0832">Ubl conjugation</keyword>
<evidence type="ECO:0000250" key="1"/>
<evidence type="ECO:0000250" key="2">
    <source>
        <dbReference type="UniProtKB" id="Q9SAR0"/>
    </source>
</evidence>
<evidence type="ECO:0000269" key="3">
    <source>
    </source>
</evidence>
<evidence type="ECO:0000269" key="4">
    <source>
    </source>
</evidence>
<evidence type="ECO:0000269" key="5">
    <source>
    </source>
</evidence>
<evidence type="ECO:0000269" key="6">
    <source>
    </source>
</evidence>
<evidence type="ECO:0000269" key="7">
    <source>
    </source>
</evidence>
<evidence type="ECO:0000305" key="8"/>
<dbReference type="EC" id="4.4.1.14"/>
<dbReference type="EMBL" id="L29261">
    <property type="protein sequence ID" value="AAA87292.1"/>
    <property type="molecule type" value="mRNA"/>
</dbReference>
<dbReference type="EMBL" id="L29260">
    <property type="protein sequence ID" value="AAA87291.1"/>
    <property type="molecule type" value="Genomic_DNA"/>
</dbReference>
<dbReference type="EMBL" id="AB010075">
    <property type="protein sequence ID" value="BAB10687.1"/>
    <property type="molecule type" value="Genomic_DNA"/>
</dbReference>
<dbReference type="EMBL" id="AB020743">
    <property type="protein sequence ID" value="BAB10687.1"/>
    <property type="status" value="JOINED"/>
    <property type="molecule type" value="Genomic_DNA"/>
</dbReference>
<dbReference type="EMBL" id="AL021684">
    <property type="protein sequence ID" value="CAA16680.1"/>
    <property type="molecule type" value="Genomic_DNA"/>
</dbReference>
<dbReference type="EMBL" id="CP002688">
    <property type="protein sequence ID" value="AED98109.1"/>
    <property type="molecule type" value="Genomic_DNA"/>
</dbReference>
<dbReference type="EMBL" id="AF334720">
    <property type="protein sequence ID" value="AAG50098.1"/>
    <property type="molecule type" value="mRNA"/>
</dbReference>
<dbReference type="EMBL" id="AK229087">
    <property type="protein sequence ID" value="BAF00967.1"/>
    <property type="molecule type" value="mRNA"/>
</dbReference>
<dbReference type="PIR" id="S71174">
    <property type="entry name" value="S71174"/>
</dbReference>
<dbReference type="RefSeq" id="NP_201381.1">
    <property type="nucleotide sequence ID" value="NM_125977.2"/>
</dbReference>
<dbReference type="SMR" id="Q37001"/>
<dbReference type="BioGRID" id="21951">
    <property type="interactions" value="8"/>
</dbReference>
<dbReference type="FunCoup" id="Q37001">
    <property type="interactions" value="286"/>
</dbReference>
<dbReference type="IntAct" id="Q37001">
    <property type="interactions" value="3"/>
</dbReference>
<dbReference type="STRING" id="3702.Q37001"/>
<dbReference type="BindingDB" id="Q37001"/>
<dbReference type="ChEMBL" id="CHEMBL2242742"/>
<dbReference type="iPTMnet" id="Q37001"/>
<dbReference type="PaxDb" id="3702-AT5G65800.1"/>
<dbReference type="EnsemblPlants" id="AT5G65800.1">
    <property type="protein sequence ID" value="AT5G65800.1"/>
    <property type="gene ID" value="AT5G65800"/>
</dbReference>
<dbReference type="GeneID" id="836709"/>
<dbReference type="Gramene" id="AT5G65800.1">
    <property type="protein sequence ID" value="AT5G65800.1"/>
    <property type="gene ID" value="AT5G65800"/>
</dbReference>
<dbReference type="KEGG" id="ath:AT5G65800"/>
<dbReference type="Araport" id="AT5G65800"/>
<dbReference type="TAIR" id="AT5G65800">
    <property type="gene designation" value="ACS5"/>
</dbReference>
<dbReference type="eggNOG" id="KOG0256">
    <property type="taxonomic scope" value="Eukaryota"/>
</dbReference>
<dbReference type="HOGENOM" id="CLU_017584_1_0_1"/>
<dbReference type="InParanoid" id="Q37001"/>
<dbReference type="OMA" id="FCLANQG"/>
<dbReference type="OrthoDB" id="1033458at2759"/>
<dbReference type="PhylomeDB" id="Q37001"/>
<dbReference type="BRENDA" id="4.4.1.14">
    <property type="organism ID" value="399"/>
</dbReference>
<dbReference type="SABIO-RK" id="Q37001"/>
<dbReference type="UniPathway" id="UPA00384">
    <property type="reaction ID" value="UER00562"/>
</dbReference>
<dbReference type="PRO" id="PR:Q37001"/>
<dbReference type="Proteomes" id="UP000006548">
    <property type="component" value="Chromosome 5"/>
</dbReference>
<dbReference type="ExpressionAtlas" id="Q37001">
    <property type="expression patterns" value="baseline and differential"/>
</dbReference>
<dbReference type="GO" id="GO:0016847">
    <property type="term" value="F:1-aminocyclopropane-1-carboxylate synthase activity"/>
    <property type="evidence" value="ECO:0000314"/>
    <property type="project" value="TAIR"/>
</dbReference>
<dbReference type="GO" id="GO:0030170">
    <property type="term" value="F:pyridoxal phosphate binding"/>
    <property type="evidence" value="ECO:0007669"/>
    <property type="project" value="InterPro"/>
</dbReference>
<dbReference type="GO" id="GO:0051301">
    <property type="term" value="P:cell division"/>
    <property type="evidence" value="ECO:0000315"/>
    <property type="project" value="TAIR"/>
</dbReference>
<dbReference type="GO" id="GO:0009693">
    <property type="term" value="P:ethylene biosynthetic process"/>
    <property type="evidence" value="ECO:0000315"/>
    <property type="project" value="TAIR"/>
</dbReference>
<dbReference type="GO" id="GO:0009835">
    <property type="term" value="P:fruit ripening"/>
    <property type="evidence" value="ECO:0007669"/>
    <property type="project" value="UniProtKB-KW"/>
</dbReference>
<dbReference type="GO" id="GO:0010087">
    <property type="term" value="P:phloem or xylem histogenesis"/>
    <property type="evidence" value="ECO:0000315"/>
    <property type="project" value="TAIR"/>
</dbReference>
<dbReference type="GO" id="GO:0009735">
    <property type="term" value="P:response to cytokinin"/>
    <property type="evidence" value="ECO:0000315"/>
    <property type="project" value="TAIR"/>
</dbReference>
<dbReference type="CDD" id="cd00609">
    <property type="entry name" value="AAT_like"/>
    <property type="match status" value="1"/>
</dbReference>
<dbReference type="FunFam" id="3.90.1150.10:FF:000038">
    <property type="entry name" value="1-aminocyclopropane-1-carboxylate synthase 2"/>
    <property type="match status" value="1"/>
</dbReference>
<dbReference type="FunFam" id="3.40.640.10:FF:000051">
    <property type="entry name" value="1-aminocyclopropane-1-carboxylate synthase 3"/>
    <property type="match status" value="1"/>
</dbReference>
<dbReference type="Gene3D" id="3.90.1150.10">
    <property type="entry name" value="Aspartate Aminotransferase, domain 1"/>
    <property type="match status" value="1"/>
</dbReference>
<dbReference type="Gene3D" id="3.40.640.10">
    <property type="entry name" value="Type I PLP-dependent aspartate aminotransferase-like (Major domain)"/>
    <property type="match status" value="1"/>
</dbReference>
<dbReference type="InterPro" id="IPR004839">
    <property type="entry name" value="Aminotransferase_I/II_large"/>
</dbReference>
<dbReference type="InterPro" id="IPR050478">
    <property type="entry name" value="Ethylene_sulfur-biosynth"/>
</dbReference>
<dbReference type="InterPro" id="IPR004838">
    <property type="entry name" value="NHTrfase_class1_PyrdxlP-BS"/>
</dbReference>
<dbReference type="InterPro" id="IPR015424">
    <property type="entry name" value="PyrdxlP-dep_Trfase"/>
</dbReference>
<dbReference type="InterPro" id="IPR015421">
    <property type="entry name" value="PyrdxlP-dep_Trfase_major"/>
</dbReference>
<dbReference type="InterPro" id="IPR015422">
    <property type="entry name" value="PyrdxlP-dep_Trfase_small"/>
</dbReference>
<dbReference type="PANTHER" id="PTHR43795:SF54">
    <property type="entry name" value="1-AMINOCYCLOPROPANE-1-CARBOXYLATE SYNTHASE 5"/>
    <property type="match status" value="1"/>
</dbReference>
<dbReference type="PANTHER" id="PTHR43795">
    <property type="entry name" value="BIFUNCTIONAL ASPARTATE AMINOTRANSFERASE AND GLUTAMATE/ASPARTATE-PREPHENATE AMINOTRANSFERASE-RELATED"/>
    <property type="match status" value="1"/>
</dbReference>
<dbReference type="Pfam" id="PF00155">
    <property type="entry name" value="Aminotran_1_2"/>
    <property type="match status" value="1"/>
</dbReference>
<dbReference type="PRINTS" id="PR00753">
    <property type="entry name" value="ACCSYNTHASE"/>
</dbReference>
<dbReference type="SUPFAM" id="SSF53383">
    <property type="entry name" value="PLP-dependent transferases"/>
    <property type="match status" value="1"/>
</dbReference>
<dbReference type="PROSITE" id="PS00105">
    <property type="entry name" value="AA_TRANSFER_CLASS_1"/>
    <property type="match status" value="1"/>
</dbReference>
<protein>
    <recommendedName>
        <fullName>1-aminocyclopropane-1-carboxylate synthase 5</fullName>
        <shortName>ACC synthase 5</shortName>
        <ecNumber>4.4.1.14</ecNumber>
    </recommendedName>
    <alternativeName>
        <fullName>Ethylene-overproduction protein 2</fullName>
    </alternativeName>
    <alternativeName>
        <fullName>S-adenosyl-L-methionine methylthioadenosine-lyase 5</fullName>
    </alternativeName>
</protein>
<proteinExistence type="evidence at protein level"/>
<feature type="chain" id="PRO_0000123899" description="1-aminocyclopropane-1-carboxylate synthase 5">
    <location>
        <begin position="1"/>
        <end position="470"/>
    </location>
</feature>
<feature type="binding site" evidence="1">
    <location>
        <position position="47"/>
    </location>
    <ligand>
        <name>substrate</name>
    </ligand>
</feature>
<feature type="binding site" evidence="1">
    <location>
        <position position="85"/>
    </location>
    <ligand>
        <name>substrate</name>
    </ligand>
</feature>
<feature type="modified residue" description="N6-(pyridoxal phosphate)lysine" evidence="1">
    <location>
        <position position="272"/>
    </location>
</feature>
<feature type="modified residue" description="Phosphoserine" evidence="2">
    <location>
        <position position="461"/>
    </location>
</feature>
<feature type="mutagenesis site" description="In cin5-3; defective in cytokinin induced ethylene.">
    <original>S</original>
    <variation>F</variation>
    <location>
        <position position="201"/>
    </location>
</feature>
<feature type="mutagenesis site" description="In cin5-2; defective in cytokinin induced ethylene.">
    <original>S</original>
    <variation>N</variation>
    <location>
        <position position="269"/>
    </location>
</feature>
<feature type="mutagenesis site" description="In eto2; increases its stability leading to ethylene overproduction.">
    <original>RVSWTDRVPDER</original>
    <variation>PGFMDRSCT</variation>
    <location>
        <begin position="459"/>
        <end position="470"/>
    </location>
</feature>
<organism>
    <name type="scientific">Arabidopsis thaliana</name>
    <name type="common">Mouse-ear cress</name>
    <dbReference type="NCBI Taxonomy" id="3702"/>
    <lineage>
        <taxon>Eukaryota</taxon>
        <taxon>Viridiplantae</taxon>
        <taxon>Streptophyta</taxon>
        <taxon>Embryophyta</taxon>
        <taxon>Tracheophyta</taxon>
        <taxon>Spermatophyta</taxon>
        <taxon>Magnoliopsida</taxon>
        <taxon>eudicotyledons</taxon>
        <taxon>Gunneridae</taxon>
        <taxon>Pentapetalae</taxon>
        <taxon>rosids</taxon>
        <taxon>malvids</taxon>
        <taxon>Brassicales</taxon>
        <taxon>Brassicaceae</taxon>
        <taxon>Camelineae</taxon>
        <taxon>Arabidopsis</taxon>
    </lineage>
</organism>
<accession>Q37001</accession>
<accession>O49537</accession>
<accession>Q0WPI2</accession>
<accession>Q9S9C3</accession>
<comment type="function">
    <text>1-aminocyclopropane-1-carboxylate synthase (ACS) enzymes catalyze the conversion of S-adenosyl-L-methionine (SAM) into 1-aminocyclopropane-1-carboxylate (ACC), a direct precursor of ethylene.</text>
</comment>
<comment type="catalytic activity">
    <reaction evidence="3">
        <text>S-adenosyl-L-methionine = 1-aminocyclopropane-1-carboxylate + S-methyl-5'-thioadenosine + H(+)</text>
        <dbReference type="Rhea" id="RHEA:21744"/>
        <dbReference type="ChEBI" id="CHEBI:15378"/>
        <dbReference type="ChEBI" id="CHEBI:17509"/>
        <dbReference type="ChEBI" id="CHEBI:58360"/>
        <dbReference type="ChEBI" id="CHEBI:59789"/>
        <dbReference type="EC" id="4.4.1.14"/>
    </reaction>
</comment>
<comment type="cofactor">
    <cofactor>
        <name>pyridoxal 5'-phosphate</name>
        <dbReference type="ChEBI" id="CHEBI:597326"/>
    </cofactor>
</comment>
<comment type="biophysicochemical properties">
    <kinetics>
        <KM>37 uM for S-adenosyl-L-methionine</KM>
        <Vmax>81.7 uM/h/mg enzyme</Vmax>
    </kinetics>
    <phDependence>
        <text>Optimum pH is 7.8.</text>
    </phDependence>
</comment>
<comment type="pathway">
    <text>Alkene biosynthesis; ethylene biosynthesis via S-adenosyl-L-methionine; ethylene from S-adenosyl-L-methionine: step 1/2.</text>
</comment>
<comment type="subunit">
    <text evidence="1 4 5 6 7">Homodimer and heterodimer. In vivo, the relevance of heterodimerization with other ACS enzymes is however unsure (By similarity). Interacts (via its C-terminal region) with FEI1, FEI2, ETO1, EOL1 and EOL2 (PubMed:15118728, PubMed:18808454, PubMed:19017745). Interacts with GRF3 (PubMed:25122152).</text>
</comment>
<comment type="interaction">
    <interactant intactId="EBI-593450">
        <id>Q37001</id>
    </interactant>
    <interactant intactId="EBI-593440">
        <id>O65020</id>
        <label>ETO1</label>
    </interactant>
    <organismsDiffer>false</organismsDiffer>
    <experiments>3</experiments>
</comment>
<comment type="tissue specificity">
    <text evidence="3">Expressed in roots and siliques.</text>
</comment>
<comment type="induction">
    <text evidence="3">By indole-3-acetic acid (IAA) and cycloheximide (CHX). In response to low dose of cytokinin.</text>
</comment>
<comment type="PTM">
    <text>May be processed at its C-terminus.</text>
</comment>
<comment type="PTM">
    <text evidence="8">Ubiquitinated (Probable). The interaction with ETO1 (and possibly EOL1 and EOL2) mediate its proteasome-dependent degradation. Its stability and degradation plays a central role in ethylene biosynthesis.</text>
</comment>
<comment type="similarity">
    <text evidence="8">Belongs to the class-I pyridoxal-phosphate-dependent aminotransferase family.</text>
</comment>
<reference key="1">
    <citation type="journal article" date="1996" name="Plant J.">
        <title>Li(+)-regulated 1-aminocyclopropane-1-carboxylate synthase gene expression in Arabidopsis thaliana.</title>
        <authorList>
            <person name="Liang X.-W."/>
            <person name="Shen N.F."/>
            <person name="Theologis A."/>
        </authorList>
    </citation>
    <scope>NUCLEOTIDE SEQUENCE [GENOMIC DNA / MRNA]</scope>
    <source>
        <strain>cv. Columbia</strain>
        <tissue>Seedling</tissue>
    </source>
</reference>
<reference key="2">
    <citation type="journal article" date="1998" name="DNA Res.">
        <title>Structural analysis of Arabidopsis thaliana chromosome 5. IV. Sequence features of the regions of 1,456,315 bp covered by nineteen physically assigned P1 and TAC clones.</title>
        <authorList>
            <person name="Sato S."/>
            <person name="Kaneko T."/>
            <person name="Kotani H."/>
            <person name="Nakamura Y."/>
            <person name="Asamizu E."/>
            <person name="Miyajima N."/>
            <person name="Tabata S."/>
        </authorList>
    </citation>
    <scope>NUCLEOTIDE SEQUENCE [LARGE SCALE GENOMIC DNA]</scope>
    <source>
        <strain>cv. Columbia</strain>
    </source>
</reference>
<reference key="3">
    <citation type="journal article" date="2000" name="DNA Res.">
        <title>Structural analysis of Arabidopsis thaliana chromosome 5. X. Sequence features of the regions of 3,076,755 bp covered by sixty P1 and TAC clones.</title>
        <authorList>
            <person name="Sato S."/>
            <person name="Nakamura Y."/>
            <person name="Kaneko T."/>
            <person name="Katoh T."/>
            <person name="Asamizu E."/>
            <person name="Kotani H."/>
            <person name="Tabata S."/>
        </authorList>
    </citation>
    <scope>NUCLEOTIDE SEQUENCE [LARGE SCALE GENOMIC DNA]</scope>
    <source>
        <strain>cv. Columbia</strain>
    </source>
</reference>
<reference key="4">
    <citation type="journal article" date="2000" name="Nature">
        <title>Sequence and analysis of chromosome 5 of the plant Arabidopsis thaliana.</title>
        <authorList>
            <person name="Tabata S."/>
            <person name="Kaneko T."/>
            <person name="Nakamura Y."/>
            <person name="Kotani H."/>
            <person name="Kato T."/>
            <person name="Asamizu E."/>
            <person name="Miyajima N."/>
            <person name="Sasamoto S."/>
            <person name="Kimura T."/>
            <person name="Hosouchi T."/>
            <person name="Kawashima K."/>
            <person name="Kohara M."/>
            <person name="Matsumoto M."/>
            <person name="Matsuno A."/>
            <person name="Muraki A."/>
            <person name="Nakayama S."/>
            <person name="Nakazaki N."/>
            <person name="Naruo K."/>
            <person name="Okumura S."/>
            <person name="Shinpo S."/>
            <person name="Takeuchi C."/>
            <person name="Wada T."/>
            <person name="Watanabe A."/>
            <person name="Yamada M."/>
            <person name="Yasuda M."/>
            <person name="Sato S."/>
            <person name="de la Bastide M."/>
            <person name="Huang E."/>
            <person name="Spiegel L."/>
            <person name="Gnoj L."/>
            <person name="O'Shaughnessy A."/>
            <person name="Preston R."/>
            <person name="Habermann K."/>
            <person name="Murray J."/>
            <person name="Johnson D."/>
            <person name="Rohlfing T."/>
            <person name="Nelson J."/>
            <person name="Stoneking T."/>
            <person name="Pepin K."/>
            <person name="Spieth J."/>
            <person name="Sekhon M."/>
            <person name="Armstrong J."/>
            <person name="Becker M."/>
            <person name="Belter E."/>
            <person name="Cordum H."/>
            <person name="Cordes M."/>
            <person name="Courtney L."/>
            <person name="Courtney W."/>
            <person name="Dante M."/>
            <person name="Du H."/>
            <person name="Edwards J."/>
            <person name="Fryman J."/>
            <person name="Haakensen B."/>
            <person name="Lamar E."/>
            <person name="Latreille P."/>
            <person name="Leonard S."/>
            <person name="Meyer R."/>
            <person name="Mulvaney E."/>
            <person name="Ozersky P."/>
            <person name="Riley A."/>
            <person name="Strowmatt C."/>
            <person name="Wagner-McPherson C."/>
            <person name="Wollam A."/>
            <person name="Yoakum M."/>
            <person name="Bell M."/>
            <person name="Dedhia N."/>
            <person name="Parnell L."/>
            <person name="Shah R."/>
            <person name="Rodriguez M."/>
            <person name="Hoon See L."/>
            <person name="Vil D."/>
            <person name="Baker J."/>
            <person name="Kirchoff K."/>
            <person name="Toth K."/>
            <person name="King L."/>
            <person name="Bahret A."/>
            <person name="Miller B."/>
            <person name="Marra M.A."/>
            <person name="Martienssen R."/>
            <person name="McCombie W.R."/>
            <person name="Wilson R.K."/>
            <person name="Murphy G."/>
            <person name="Bancroft I."/>
            <person name="Volckaert G."/>
            <person name="Wambutt R."/>
            <person name="Duesterhoeft A."/>
            <person name="Stiekema W."/>
            <person name="Pohl T."/>
            <person name="Entian K.-D."/>
            <person name="Terryn N."/>
            <person name="Hartley N."/>
            <person name="Bent E."/>
            <person name="Johnson S."/>
            <person name="Langham S.-A."/>
            <person name="McCullagh B."/>
            <person name="Robben J."/>
            <person name="Grymonprez B."/>
            <person name="Zimmermann W."/>
            <person name="Ramsperger U."/>
            <person name="Wedler H."/>
            <person name="Balke K."/>
            <person name="Wedler E."/>
            <person name="Peters S."/>
            <person name="van Staveren M."/>
            <person name="Dirkse W."/>
            <person name="Mooijman P."/>
            <person name="Klein Lankhorst R."/>
            <person name="Weitzenegger T."/>
            <person name="Bothe G."/>
            <person name="Rose M."/>
            <person name="Hauf J."/>
            <person name="Berneiser S."/>
            <person name="Hempel S."/>
            <person name="Feldpausch M."/>
            <person name="Lamberth S."/>
            <person name="Villarroel R."/>
            <person name="Gielen J."/>
            <person name="Ardiles W."/>
            <person name="Bents O."/>
            <person name="Lemcke K."/>
            <person name="Kolesov G."/>
            <person name="Mayer K.F.X."/>
            <person name="Rudd S."/>
            <person name="Schoof H."/>
            <person name="Schueller C."/>
            <person name="Zaccaria P."/>
            <person name="Mewes H.-W."/>
            <person name="Bevan M."/>
            <person name="Fransz P.F."/>
        </authorList>
    </citation>
    <scope>NUCLEOTIDE SEQUENCE [LARGE SCALE GENOMIC DNA]</scope>
    <source>
        <strain>cv. Columbia</strain>
    </source>
</reference>
<reference key="5">
    <citation type="journal article" date="2017" name="Plant J.">
        <title>Araport11: a complete reannotation of the Arabidopsis thaliana reference genome.</title>
        <authorList>
            <person name="Cheng C.Y."/>
            <person name="Krishnakumar V."/>
            <person name="Chan A.P."/>
            <person name="Thibaud-Nissen F."/>
            <person name="Schobel S."/>
            <person name="Town C.D."/>
        </authorList>
    </citation>
    <scope>GENOME REANNOTATION</scope>
    <source>
        <strain>cv. Columbia</strain>
    </source>
</reference>
<reference key="6">
    <citation type="journal article" date="2003" name="Science">
        <title>Empirical analysis of transcriptional activity in the Arabidopsis genome.</title>
        <authorList>
            <person name="Yamada K."/>
            <person name="Lim J."/>
            <person name="Dale J.M."/>
            <person name="Chen H."/>
            <person name="Shinn P."/>
            <person name="Palm C.J."/>
            <person name="Southwick A.M."/>
            <person name="Wu H.C."/>
            <person name="Kim C.J."/>
            <person name="Nguyen M."/>
            <person name="Pham P.K."/>
            <person name="Cheuk R.F."/>
            <person name="Karlin-Newmann G."/>
            <person name="Liu S.X."/>
            <person name="Lam B."/>
            <person name="Sakano H."/>
            <person name="Wu T."/>
            <person name="Yu G."/>
            <person name="Miranda M."/>
            <person name="Quach H.L."/>
            <person name="Tripp M."/>
            <person name="Chang C.H."/>
            <person name="Lee J.M."/>
            <person name="Toriumi M.J."/>
            <person name="Chan M.M."/>
            <person name="Tang C.C."/>
            <person name="Onodera C.S."/>
            <person name="Deng J.M."/>
            <person name="Akiyama K."/>
            <person name="Ansari Y."/>
            <person name="Arakawa T."/>
            <person name="Banh J."/>
            <person name="Banno F."/>
            <person name="Bowser L."/>
            <person name="Brooks S.Y."/>
            <person name="Carninci P."/>
            <person name="Chao Q."/>
            <person name="Choy N."/>
            <person name="Enju A."/>
            <person name="Goldsmith A.D."/>
            <person name="Gurjal M."/>
            <person name="Hansen N.F."/>
            <person name="Hayashizaki Y."/>
            <person name="Johnson-Hopson C."/>
            <person name="Hsuan V.W."/>
            <person name="Iida K."/>
            <person name="Karnes M."/>
            <person name="Khan S."/>
            <person name="Koesema E."/>
            <person name="Ishida J."/>
            <person name="Jiang P.X."/>
            <person name="Jones T."/>
            <person name="Kawai J."/>
            <person name="Kamiya A."/>
            <person name="Meyers C."/>
            <person name="Nakajima M."/>
            <person name="Narusaka M."/>
            <person name="Seki M."/>
            <person name="Sakurai T."/>
            <person name="Satou M."/>
            <person name="Tamse R."/>
            <person name="Vaysberg M."/>
            <person name="Wallender E.K."/>
            <person name="Wong C."/>
            <person name="Yamamura Y."/>
            <person name="Yuan S."/>
            <person name="Shinozaki K."/>
            <person name="Davis R.W."/>
            <person name="Theologis A."/>
            <person name="Ecker J.R."/>
        </authorList>
    </citation>
    <scope>NUCLEOTIDE SEQUENCE [LARGE SCALE MRNA]</scope>
    <source>
        <strain>cv. Columbia</strain>
    </source>
</reference>
<reference key="7">
    <citation type="submission" date="2006-07" db="EMBL/GenBank/DDBJ databases">
        <title>Large-scale analysis of RIKEN Arabidopsis full-length (RAFL) cDNAs.</title>
        <authorList>
            <person name="Totoki Y."/>
            <person name="Seki M."/>
            <person name="Ishida J."/>
            <person name="Nakajima M."/>
            <person name="Enju A."/>
            <person name="Kamiya A."/>
            <person name="Narusaka M."/>
            <person name="Shin-i T."/>
            <person name="Nakagawa M."/>
            <person name="Sakamoto N."/>
            <person name="Oishi K."/>
            <person name="Kohara Y."/>
            <person name="Kobayashi M."/>
            <person name="Toyoda A."/>
            <person name="Sakaki Y."/>
            <person name="Sakurai T."/>
            <person name="Iida K."/>
            <person name="Akiyama K."/>
            <person name="Satou M."/>
            <person name="Toyoda T."/>
            <person name="Konagaya A."/>
            <person name="Carninci P."/>
            <person name="Kawai J."/>
            <person name="Hayashizaki Y."/>
            <person name="Shinozaki K."/>
        </authorList>
    </citation>
    <scope>NUCLEOTIDE SEQUENCE [LARGE SCALE MRNA]</scope>
    <source>
        <strain>cv. Columbia</strain>
    </source>
</reference>
<reference key="8">
    <citation type="journal article" date="1992" name="Proc. Natl. Acad. Sci. U.S.A.">
        <title>The 1-aminocyclopropane-1-carboxylate synthase gene family of Arabidopsis thaliana.</title>
        <authorList>
            <person name="Liang X.-W."/>
            <person name="Abel S."/>
            <person name="Keller J.A."/>
            <person name="Shen N.F."/>
            <person name="Theologis A."/>
        </authorList>
    </citation>
    <scope>NUCLEOTIDE SEQUENCE [GENOMIC DNA] OF 50-81</scope>
    <source>
        <strain>cv. Columbia</strain>
    </source>
</reference>
<reference key="9">
    <citation type="journal article" date="2003" name="Plant Cell">
        <title>The eto1, eto2, and eto3 mutations and cytokinin treatment increase ethylene biosynthesis in Arabidopsis by increasing the stability of ACS protein.</title>
        <authorList>
            <person name="Chae H.S."/>
            <person name="Faure F."/>
            <person name="Kieber J.J."/>
        </authorList>
    </citation>
    <scope>MUTANT ETO2</scope>
</reference>
<reference key="10">
    <citation type="journal article" date="2003" name="J. Biol. Chem.">
        <title>Biochemical diversity among the 1-amino-cyclopropane-1-carboxylate synthase isozymes encoded by the Arabidopsis gene family.</title>
        <authorList>
            <person name="Yamagami T."/>
            <person name="Tsuchisaka A."/>
            <person name="Yamada K."/>
            <person name="Haddon W.F."/>
            <person name="Harden L.A."/>
            <person name="Theologis A."/>
        </authorList>
    </citation>
    <scope>ENZYME ACTIVITY</scope>
    <scope>TISSUE SPECIFICITY</scope>
    <scope>INDUCTION</scope>
    <scope>PUTATIVE PROTEOLYTIC PROCESSING</scope>
</reference>
<reference key="11">
    <citation type="journal article" date="2004" name="Nature">
        <title>Regulation of ethylene gas biosynthesis by the Arabidopsis ETO1 protein.</title>
        <authorList>
            <person name="Wang K.L.-C."/>
            <person name="Yoshida H."/>
            <person name="Lurin C."/>
            <person name="Ecker J.R."/>
        </authorList>
    </citation>
    <scope>DEGRADATION</scope>
    <scope>INTERACTION WITH ETO1; EOL1 AND EOL2</scope>
</reference>
<reference key="12">
    <citation type="journal article" date="2008" name="Plant Cell">
        <title>Two leucine-rich repeat receptor kinases mediate signaling, linking cell wall biosynthesis and ACC synthase in Arabidopsis.</title>
        <authorList>
            <person name="Xu S.-L."/>
            <person name="Rahman A."/>
            <person name="Baskin T.I."/>
            <person name="Kieber J.J."/>
        </authorList>
    </citation>
    <scope>INTERACTION WITH FEI1 AND FEI2</scope>
</reference>
<reference key="13">
    <citation type="journal article" date="2009" name="Plant J.">
        <title>The BTB ubiquitin ligases ETO1, EOL1 and EOL2 act collectively to regulate ethylene biosynthesis in Arabidopsis by controlling type-2 ACC synthase levels.</title>
        <authorList>
            <person name="Christians M.J."/>
            <person name="Gingerich D.J."/>
            <person name="Hansen M."/>
            <person name="Binder B.M."/>
            <person name="Kieber J.J."/>
            <person name="Vierstra R.D."/>
        </authorList>
    </citation>
    <scope>INTERACTION WITH ETO1 AND EOL1</scope>
</reference>
<reference key="14">
    <citation type="journal article" date="2014" name="Plant Cell">
        <title>The Arabidopsis 14-3-3 protein RARE COLD INDUCIBLE 1A links low-temperature response and ethylene biosynthesis to regulate freezing tolerance and cold acclimation.</title>
        <authorList>
            <person name="Catala R."/>
            <person name="Lopez-Cobollo R."/>
            <person name="Mar Castellano M."/>
            <person name="Angosto T."/>
            <person name="Alonso J.M."/>
            <person name="Ecker J.R."/>
            <person name="Salinas J."/>
        </authorList>
    </citation>
    <scope>INTERACTION WITH GRF3</scope>
</reference>
<sequence>MKQLSTKVTSNGHGQDSSYFLGWEEYEKNPYDEIKNPNGMIQMGLAENQLCFDLIESWLTKNPDAASLKRNGQSIFRELALFQDYHGMPEFKKAMAEFMEEIRGNRVTFDPKKIVLAAGSTSANETLMFCLAEPGDAFLLPTPYYPGFDRDLKWRTGAEIVPIHCSSSNGFQITESALQQAYQQAQKLDLKVKGVLVTNPSNPLGTALTRRELNLLVDFITSKNIHLISDEIYSGTMFGFEQFISVMDVLKDKKLEDTEVSKRVHVVYSLSKDLGLPGFRVGAIYSNDEMIVSAATKMSSFGLVSSQTQYLLSALLSDKKFTSQYLEENQKRLKSRQRRLVSGLESAGITCLRSNAGLFCWVDMRHLLDTNTFEAELDLWKKIVYNVKLNISPGSSCHCTEPGWFRVCFANMSEDTLDLALKRLKTFVESTDCGRMISRSSHERLKSLRKKTVSNWVFRVSWTDRVPDER</sequence>